<protein>
    <recommendedName>
        <fullName>Prephenate dehydrogenase</fullName>
        <shortName>PDH</shortName>
        <ecNumber>1.3.1.12</ecNumber>
    </recommendedName>
</protein>
<dbReference type="EC" id="1.3.1.12"/>
<dbReference type="EMBL" id="AJ938182">
    <property type="protein sequence ID" value="CAI80909.1"/>
    <property type="molecule type" value="Genomic_DNA"/>
</dbReference>
<dbReference type="RefSeq" id="WP_000214272.1">
    <property type="nucleotide sequence ID" value="NC_007622.1"/>
</dbReference>
<dbReference type="SMR" id="Q2YXV4"/>
<dbReference type="KEGG" id="sab:SAB1220c"/>
<dbReference type="HOGENOM" id="CLU_055968_2_1_9"/>
<dbReference type="UniPathway" id="UPA00122">
    <property type="reaction ID" value="UER00961"/>
</dbReference>
<dbReference type="GO" id="GO:0070403">
    <property type="term" value="F:NAD+ binding"/>
    <property type="evidence" value="ECO:0007669"/>
    <property type="project" value="InterPro"/>
</dbReference>
<dbReference type="GO" id="GO:0008977">
    <property type="term" value="F:prephenate dehydrogenase (NAD+) activity"/>
    <property type="evidence" value="ECO:0007669"/>
    <property type="project" value="UniProtKB-EC"/>
</dbReference>
<dbReference type="GO" id="GO:0004665">
    <property type="term" value="F:prephenate dehydrogenase (NADP+) activity"/>
    <property type="evidence" value="ECO:0007669"/>
    <property type="project" value="InterPro"/>
</dbReference>
<dbReference type="GO" id="GO:0006571">
    <property type="term" value="P:tyrosine biosynthetic process"/>
    <property type="evidence" value="ECO:0007669"/>
    <property type="project" value="UniProtKB-UniPathway"/>
</dbReference>
<dbReference type="CDD" id="cd04909">
    <property type="entry name" value="ACT_PDH-BS"/>
    <property type="match status" value="1"/>
</dbReference>
<dbReference type="FunFam" id="1.10.3660.10:FF:000003">
    <property type="entry name" value="Prephenate dehydrogenase"/>
    <property type="match status" value="1"/>
</dbReference>
<dbReference type="FunFam" id="3.40.50.720:FF:000208">
    <property type="entry name" value="Prephenate dehydrogenase"/>
    <property type="match status" value="1"/>
</dbReference>
<dbReference type="Gene3D" id="1.10.3660.10">
    <property type="entry name" value="6-phosphogluconate dehydrogenase C-terminal like domain"/>
    <property type="match status" value="1"/>
</dbReference>
<dbReference type="Gene3D" id="3.40.50.720">
    <property type="entry name" value="NAD(P)-binding Rossmann-like Domain"/>
    <property type="match status" value="1"/>
</dbReference>
<dbReference type="InterPro" id="IPR008927">
    <property type="entry name" value="6-PGluconate_DH-like_C_sf"/>
</dbReference>
<dbReference type="InterPro" id="IPR045865">
    <property type="entry name" value="ACT-like_dom_sf"/>
</dbReference>
<dbReference type="InterPro" id="IPR002912">
    <property type="entry name" value="ACT_dom"/>
</dbReference>
<dbReference type="InterPro" id="IPR036291">
    <property type="entry name" value="NAD(P)-bd_dom_sf"/>
</dbReference>
<dbReference type="InterPro" id="IPR046825">
    <property type="entry name" value="PDH_C"/>
</dbReference>
<dbReference type="InterPro" id="IPR046826">
    <property type="entry name" value="PDH_N"/>
</dbReference>
<dbReference type="InterPro" id="IPR050812">
    <property type="entry name" value="Preph/Arog_dehydrog"/>
</dbReference>
<dbReference type="InterPro" id="IPR003099">
    <property type="entry name" value="Prephen_DH"/>
</dbReference>
<dbReference type="NCBIfam" id="NF005106">
    <property type="entry name" value="PRK06545.1-4"/>
    <property type="match status" value="1"/>
</dbReference>
<dbReference type="NCBIfam" id="NF005107">
    <property type="entry name" value="PRK06545.1-5"/>
    <property type="match status" value="1"/>
</dbReference>
<dbReference type="PANTHER" id="PTHR21363">
    <property type="entry name" value="PREPHENATE DEHYDROGENASE"/>
    <property type="match status" value="1"/>
</dbReference>
<dbReference type="PANTHER" id="PTHR21363:SF0">
    <property type="entry name" value="PREPHENATE DEHYDROGENASE [NADP(+)]"/>
    <property type="match status" value="1"/>
</dbReference>
<dbReference type="Pfam" id="PF20463">
    <property type="entry name" value="PDH_C"/>
    <property type="match status" value="1"/>
</dbReference>
<dbReference type="Pfam" id="PF02153">
    <property type="entry name" value="PDH_N"/>
    <property type="match status" value="1"/>
</dbReference>
<dbReference type="SUPFAM" id="SSF48179">
    <property type="entry name" value="6-phosphogluconate dehydrogenase C-terminal domain-like"/>
    <property type="match status" value="1"/>
</dbReference>
<dbReference type="SUPFAM" id="SSF55021">
    <property type="entry name" value="ACT-like"/>
    <property type="match status" value="1"/>
</dbReference>
<dbReference type="SUPFAM" id="SSF51735">
    <property type="entry name" value="NAD(P)-binding Rossmann-fold domains"/>
    <property type="match status" value="1"/>
</dbReference>
<dbReference type="PROSITE" id="PS51671">
    <property type="entry name" value="ACT"/>
    <property type="match status" value="1"/>
</dbReference>
<dbReference type="PROSITE" id="PS51176">
    <property type="entry name" value="PDH_ADH"/>
    <property type="match status" value="1"/>
</dbReference>
<comment type="catalytic activity">
    <reaction>
        <text>prephenate + NAD(+) = 3-(4-hydroxyphenyl)pyruvate + CO2 + NADH</text>
        <dbReference type="Rhea" id="RHEA:13869"/>
        <dbReference type="ChEBI" id="CHEBI:16526"/>
        <dbReference type="ChEBI" id="CHEBI:29934"/>
        <dbReference type="ChEBI" id="CHEBI:36242"/>
        <dbReference type="ChEBI" id="CHEBI:57540"/>
        <dbReference type="ChEBI" id="CHEBI:57945"/>
        <dbReference type="EC" id="1.3.1.12"/>
    </reaction>
</comment>
<comment type="pathway">
    <text>Amino-acid biosynthesis; L-tyrosine biosynthesis; (4-hydroxyphenyl)pyruvate from prephenate (NAD(+) route): step 1/1.</text>
</comment>
<comment type="similarity">
    <text evidence="4">Belongs to the prephenate/arogenate dehydrogenase family.</text>
</comment>
<sequence length="363" mass="40244">MTTVLFVGLGLIGGSLASNIKYHNPNTNIIAYDADTSQLDKAKSIGIINEKCLNYSEAIKKADVIIYATPVAITNKYLSELIDMPTKPGVIVSDTGSTKAMIQQHECSLLKHNIHLVSGHPMAGSHKSGVLNAKKHLFENAYYILVYNEPRNEQAANTLKELLSPTLAKFIVTTAEEHDYVTSVVSHLPHIVASSLVHVSQKNGQEHHLVNKLAAGGFRDITRIASSNVQMWKDITLSNKTYILEMIGQLKSQFQDLEKLIESNDSEKLSSFFAEAKSYRDALPAKQLGGLNTAYDLYVDIPDESGMISKVTYILSLHNISISNLRILEVREDIYGALKISFKNPTDRERGMQALSDFDCYIQ</sequence>
<reference key="1">
    <citation type="journal article" date="2007" name="PLoS ONE">
        <title>Molecular correlates of host specialization in Staphylococcus aureus.</title>
        <authorList>
            <person name="Herron-Olson L."/>
            <person name="Fitzgerald J.R."/>
            <person name="Musser J.M."/>
            <person name="Kapur V."/>
        </authorList>
    </citation>
    <scope>NUCLEOTIDE SEQUENCE [LARGE SCALE GENOMIC DNA]</scope>
    <source>
        <strain>bovine RF122 / ET3-1</strain>
    </source>
</reference>
<organism>
    <name type="scientific">Staphylococcus aureus (strain bovine RF122 / ET3-1)</name>
    <dbReference type="NCBI Taxonomy" id="273036"/>
    <lineage>
        <taxon>Bacteria</taxon>
        <taxon>Bacillati</taxon>
        <taxon>Bacillota</taxon>
        <taxon>Bacilli</taxon>
        <taxon>Bacillales</taxon>
        <taxon>Staphylococcaceae</taxon>
        <taxon>Staphylococcus</taxon>
    </lineage>
</organism>
<gene>
    <name type="primary">tyrA</name>
    <name type="ordered locus">SAB1220c</name>
</gene>
<proteinExistence type="inferred from homology"/>
<feature type="chain" id="PRO_0000282654" description="Prephenate dehydrogenase">
    <location>
        <begin position="1"/>
        <end position="363"/>
    </location>
</feature>
<feature type="domain" description="Prephenate/arogenate dehydrogenase" evidence="2">
    <location>
        <begin position="2"/>
        <end position="291"/>
    </location>
</feature>
<feature type="domain" description="ACT" evidence="3">
    <location>
        <begin position="296"/>
        <end position="363"/>
    </location>
</feature>
<feature type="binding site" evidence="1">
    <location>
        <begin position="3"/>
        <end position="33"/>
    </location>
    <ligand>
        <name>NAD(+)</name>
        <dbReference type="ChEBI" id="CHEBI:57540"/>
    </ligand>
</feature>
<keyword id="KW-0028">Amino-acid biosynthesis</keyword>
<keyword id="KW-0057">Aromatic amino acid biosynthesis</keyword>
<keyword id="KW-0520">NAD</keyword>
<keyword id="KW-0560">Oxidoreductase</keyword>
<keyword id="KW-0827">Tyrosine biosynthesis</keyword>
<accession>Q2YXV4</accession>
<name>TYRA_STAAB</name>
<evidence type="ECO:0000255" key="1"/>
<evidence type="ECO:0000255" key="2">
    <source>
        <dbReference type="PROSITE-ProRule" id="PRU00522"/>
    </source>
</evidence>
<evidence type="ECO:0000255" key="3">
    <source>
        <dbReference type="PROSITE-ProRule" id="PRU01007"/>
    </source>
</evidence>
<evidence type="ECO:0000305" key="4"/>